<organism>
    <name type="scientific">Mogera imaizumii</name>
    <name type="common">Lesser Japanese mole</name>
    <name type="synonym">Mogera minor</name>
    <dbReference type="NCBI Taxonomy" id="114415"/>
    <lineage>
        <taxon>Eukaryota</taxon>
        <taxon>Metazoa</taxon>
        <taxon>Chordata</taxon>
        <taxon>Craniata</taxon>
        <taxon>Vertebrata</taxon>
        <taxon>Euteleostomi</taxon>
        <taxon>Mammalia</taxon>
        <taxon>Eutheria</taxon>
        <taxon>Laurasiatheria</taxon>
        <taxon>Eulipotyphla</taxon>
        <taxon>Talpidae</taxon>
        <taxon>Mogera</taxon>
    </lineage>
</organism>
<reference key="1">
    <citation type="journal article" date="2000" name="Genes Genet. Syst.">
        <title>Molecular phylogeny of East Asian moles inferred from the sequence variation of the mitochondrial cytochrome b gene.</title>
        <authorList>
            <person name="Tsuchiya K."/>
            <person name="Suzuki H."/>
            <person name="Shinohara A."/>
            <person name="Harada M."/>
            <person name="Wakana S."/>
            <person name="Sakaizumi M."/>
            <person name="Han S.H."/>
            <person name="Lin L.K."/>
            <person name="Kryukov A.P."/>
        </authorList>
    </citation>
    <scope>NUCLEOTIDE SEQUENCE [GENOMIC DNA]</scope>
</reference>
<comment type="function">
    <text evidence="2">Component of the ubiquinol-cytochrome c reductase complex (complex III or cytochrome b-c1 complex) that is part of the mitochondrial respiratory chain. The b-c1 complex mediates electron transfer from ubiquinol to cytochrome c. Contributes to the generation of a proton gradient across the mitochondrial membrane that is then used for ATP synthesis.</text>
</comment>
<comment type="cofactor">
    <cofactor evidence="2">
        <name>heme b</name>
        <dbReference type="ChEBI" id="CHEBI:60344"/>
    </cofactor>
    <text evidence="2">Binds 2 heme b groups non-covalently.</text>
</comment>
<comment type="subunit">
    <text evidence="2">The cytochrome bc1 complex contains 11 subunits: 3 respiratory subunits (MT-CYB, CYC1 and UQCRFS1), 2 core proteins (UQCRC1 and UQCRC2) and 6 low-molecular weight proteins (UQCRH/QCR6, UQCRB/QCR7, UQCRQ/QCR8, UQCR10/QCR9, UQCR11/QCR10 and a cleavage product of UQCRFS1). This cytochrome bc1 complex then forms a dimer.</text>
</comment>
<comment type="subcellular location">
    <subcellularLocation>
        <location evidence="2">Mitochondrion inner membrane</location>
        <topology evidence="2">Multi-pass membrane protein</topology>
    </subcellularLocation>
</comment>
<comment type="miscellaneous">
    <text evidence="1">Heme 1 (or BL or b562) is low-potential and absorbs at about 562 nm, and heme 2 (or BH or b566) is high-potential and absorbs at about 566 nm.</text>
</comment>
<comment type="similarity">
    <text evidence="3 4">Belongs to the cytochrome b family.</text>
</comment>
<comment type="caution">
    <text evidence="2">The full-length protein contains only eight transmembrane helices, not nine as predicted by bioinformatics tools.</text>
</comment>
<protein>
    <recommendedName>
        <fullName>Cytochrome b</fullName>
    </recommendedName>
    <alternativeName>
        <fullName>Complex III subunit 3</fullName>
    </alternativeName>
    <alternativeName>
        <fullName>Complex III subunit III</fullName>
    </alternativeName>
    <alternativeName>
        <fullName>Cytochrome b-c1 complex subunit 3</fullName>
    </alternativeName>
    <alternativeName>
        <fullName>Ubiquinol-cytochrome-c reductase complex cytochrome b subunit</fullName>
    </alternativeName>
</protein>
<keyword id="KW-0249">Electron transport</keyword>
<keyword id="KW-0349">Heme</keyword>
<keyword id="KW-0408">Iron</keyword>
<keyword id="KW-0472">Membrane</keyword>
<keyword id="KW-0479">Metal-binding</keyword>
<keyword id="KW-0496">Mitochondrion</keyword>
<keyword id="KW-0999">Mitochondrion inner membrane</keyword>
<keyword id="KW-0679">Respiratory chain</keyword>
<keyword id="KW-0812">Transmembrane</keyword>
<keyword id="KW-1133">Transmembrane helix</keyword>
<keyword id="KW-0813">Transport</keyword>
<keyword id="KW-0830">Ubiquinone</keyword>
<proteinExistence type="inferred from homology"/>
<sequence length="379" mass="42599">MTNIRKTHPLMKIVNSSFIDLPAPSNISSWWNFGSLLGICLILQILTGLFLAMHYTSDTMTAFSSVTHICRDVNYGWLIRYLHANGASMFFICLFLHVGRGLYYGSYMFMETWNIGVILLFAVMATAFMGYVLPWGQMSFWGATVITNLLSAIPYIGTDLVEWIWGGFSVDKATLTRFFAFHFILPFIIAALAGVHLLFLHETGSNNPSGLSSDTDKIPFHPYYTIKDILGALVLILALSSLVLFSPDLLGDPDNYIPANPLNTPPHIKPEWYFLFAYAILRSIPNKLGGVLALVFSILILALMPFLHTSKQRSMMFRPISQCLFWLLVADLLILTWIGGQPVEHPFIIIGQLASILYFSLILIMMPLASLVENNLLKW</sequence>
<accession>Q9MQX8</accession>
<name>CYB_MOGIM</name>
<geneLocation type="mitochondrion"/>
<gene>
    <name type="primary">MT-CYB</name>
    <name type="synonym">COB</name>
    <name type="synonym">CYTB</name>
    <name type="synonym">MTCYB</name>
</gene>
<evidence type="ECO:0000250" key="1"/>
<evidence type="ECO:0000250" key="2">
    <source>
        <dbReference type="UniProtKB" id="P00157"/>
    </source>
</evidence>
<evidence type="ECO:0000255" key="3">
    <source>
        <dbReference type="PROSITE-ProRule" id="PRU00967"/>
    </source>
</evidence>
<evidence type="ECO:0000255" key="4">
    <source>
        <dbReference type="PROSITE-ProRule" id="PRU00968"/>
    </source>
</evidence>
<dbReference type="EMBL" id="AB037609">
    <property type="protein sequence ID" value="BAA90568.1"/>
    <property type="molecule type" value="Genomic_DNA"/>
</dbReference>
<dbReference type="SMR" id="Q9MQX8"/>
<dbReference type="GO" id="GO:0005743">
    <property type="term" value="C:mitochondrial inner membrane"/>
    <property type="evidence" value="ECO:0007669"/>
    <property type="project" value="UniProtKB-SubCell"/>
</dbReference>
<dbReference type="GO" id="GO:0045275">
    <property type="term" value="C:respiratory chain complex III"/>
    <property type="evidence" value="ECO:0007669"/>
    <property type="project" value="InterPro"/>
</dbReference>
<dbReference type="GO" id="GO:0046872">
    <property type="term" value="F:metal ion binding"/>
    <property type="evidence" value="ECO:0007669"/>
    <property type="project" value="UniProtKB-KW"/>
</dbReference>
<dbReference type="GO" id="GO:0008121">
    <property type="term" value="F:ubiquinol-cytochrome-c reductase activity"/>
    <property type="evidence" value="ECO:0007669"/>
    <property type="project" value="InterPro"/>
</dbReference>
<dbReference type="GO" id="GO:0006122">
    <property type="term" value="P:mitochondrial electron transport, ubiquinol to cytochrome c"/>
    <property type="evidence" value="ECO:0007669"/>
    <property type="project" value="TreeGrafter"/>
</dbReference>
<dbReference type="CDD" id="cd00290">
    <property type="entry name" value="cytochrome_b_C"/>
    <property type="match status" value="1"/>
</dbReference>
<dbReference type="CDD" id="cd00284">
    <property type="entry name" value="Cytochrome_b_N"/>
    <property type="match status" value="1"/>
</dbReference>
<dbReference type="FunFam" id="1.20.810.10:FF:000002">
    <property type="entry name" value="Cytochrome b"/>
    <property type="match status" value="1"/>
</dbReference>
<dbReference type="Gene3D" id="1.20.810.10">
    <property type="entry name" value="Cytochrome Bc1 Complex, Chain C"/>
    <property type="match status" value="1"/>
</dbReference>
<dbReference type="InterPro" id="IPR005798">
    <property type="entry name" value="Cyt_b/b6_C"/>
</dbReference>
<dbReference type="InterPro" id="IPR036150">
    <property type="entry name" value="Cyt_b/b6_C_sf"/>
</dbReference>
<dbReference type="InterPro" id="IPR005797">
    <property type="entry name" value="Cyt_b/b6_N"/>
</dbReference>
<dbReference type="InterPro" id="IPR027387">
    <property type="entry name" value="Cytb/b6-like_sf"/>
</dbReference>
<dbReference type="InterPro" id="IPR030689">
    <property type="entry name" value="Cytochrome_b"/>
</dbReference>
<dbReference type="InterPro" id="IPR048260">
    <property type="entry name" value="Cytochrome_b_C_euk/bac"/>
</dbReference>
<dbReference type="InterPro" id="IPR048259">
    <property type="entry name" value="Cytochrome_b_N_euk/bac"/>
</dbReference>
<dbReference type="InterPro" id="IPR016174">
    <property type="entry name" value="Di-haem_cyt_TM"/>
</dbReference>
<dbReference type="PANTHER" id="PTHR19271">
    <property type="entry name" value="CYTOCHROME B"/>
    <property type="match status" value="1"/>
</dbReference>
<dbReference type="PANTHER" id="PTHR19271:SF16">
    <property type="entry name" value="CYTOCHROME B"/>
    <property type="match status" value="1"/>
</dbReference>
<dbReference type="Pfam" id="PF00032">
    <property type="entry name" value="Cytochrom_B_C"/>
    <property type="match status" value="1"/>
</dbReference>
<dbReference type="Pfam" id="PF00033">
    <property type="entry name" value="Cytochrome_B"/>
    <property type="match status" value="1"/>
</dbReference>
<dbReference type="PIRSF" id="PIRSF038885">
    <property type="entry name" value="COB"/>
    <property type="match status" value="1"/>
</dbReference>
<dbReference type="SUPFAM" id="SSF81648">
    <property type="entry name" value="a domain/subunit of cytochrome bc1 complex (Ubiquinol-cytochrome c reductase)"/>
    <property type="match status" value="1"/>
</dbReference>
<dbReference type="SUPFAM" id="SSF81342">
    <property type="entry name" value="Transmembrane di-heme cytochromes"/>
    <property type="match status" value="1"/>
</dbReference>
<dbReference type="PROSITE" id="PS51003">
    <property type="entry name" value="CYTB_CTER"/>
    <property type="match status" value="1"/>
</dbReference>
<dbReference type="PROSITE" id="PS51002">
    <property type="entry name" value="CYTB_NTER"/>
    <property type="match status" value="1"/>
</dbReference>
<feature type="chain" id="PRO_0000061195" description="Cytochrome b">
    <location>
        <begin position="1"/>
        <end position="379"/>
    </location>
</feature>
<feature type="transmembrane region" description="Helical" evidence="2">
    <location>
        <begin position="33"/>
        <end position="53"/>
    </location>
</feature>
<feature type="transmembrane region" description="Helical" evidence="2">
    <location>
        <begin position="77"/>
        <end position="98"/>
    </location>
</feature>
<feature type="transmembrane region" description="Helical" evidence="2">
    <location>
        <begin position="113"/>
        <end position="133"/>
    </location>
</feature>
<feature type="transmembrane region" description="Helical" evidence="2">
    <location>
        <begin position="178"/>
        <end position="198"/>
    </location>
</feature>
<feature type="transmembrane region" description="Helical" evidence="2">
    <location>
        <begin position="226"/>
        <end position="246"/>
    </location>
</feature>
<feature type="transmembrane region" description="Helical" evidence="2">
    <location>
        <begin position="288"/>
        <end position="308"/>
    </location>
</feature>
<feature type="transmembrane region" description="Helical" evidence="2">
    <location>
        <begin position="320"/>
        <end position="340"/>
    </location>
</feature>
<feature type="transmembrane region" description="Helical" evidence="2">
    <location>
        <begin position="347"/>
        <end position="367"/>
    </location>
</feature>
<feature type="binding site" description="axial binding residue" evidence="2">
    <location>
        <position position="83"/>
    </location>
    <ligand>
        <name>heme b</name>
        <dbReference type="ChEBI" id="CHEBI:60344"/>
        <label>b562</label>
    </ligand>
    <ligandPart>
        <name>Fe</name>
        <dbReference type="ChEBI" id="CHEBI:18248"/>
    </ligandPart>
</feature>
<feature type="binding site" description="axial binding residue" evidence="2">
    <location>
        <position position="97"/>
    </location>
    <ligand>
        <name>heme b</name>
        <dbReference type="ChEBI" id="CHEBI:60344"/>
        <label>b566</label>
    </ligand>
    <ligandPart>
        <name>Fe</name>
        <dbReference type="ChEBI" id="CHEBI:18248"/>
    </ligandPart>
</feature>
<feature type="binding site" description="axial binding residue" evidence="2">
    <location>
        <position position="182"/>
    </location>
    <ligand>
        <name>heme b</name>
        <dbReference type="ChEBI" id="CHEBI:60344"/>
        <label>b562</label>
    </ligand>
    <ligandPart>
        <name>Fe</name>
        <dbReference type="ChEBI" id="CHEBI:18248"/>
    </ligandPart>
</feature>
<feature type="binding site" description="axial binding residue" evidence="2">
    <location>
        <position position="196"/>
    </location>
    <ligand>
        <name>heme b</name>
        <dbReference type="ChEBI" id="CHEBI:60344"/>
        <label>b566</label>
    </ligand>
    <ligandPart>
        <name>Fe</name>
        <dbReference type="ChEBI" id="CHEBI:18248"/>
    </ligandPart>
</feature>
<feature type="binding site" evidence="2">
    <location>
        <position position="201"/>
    </location>
    <ligand>
        <name>a ubiquinone</name>
        <dbReference type="ChEBI" id="CHEBI:16389"/>
    </ligand>
</feature>